<evidence type="ECO:0000250" key="1">
    <source>
        <dbReference type="UniProtKB" id="Q9NZ45"/>
    </source>
</evidence>
<evidence type="ECO:0000255" key="2"/>
<evidence type="ECO:0000269" key="3">
    <source>
    </source>
</evidence>
<evidence type="ECO:0000305" key="4"/>
<evidence type="ECO:0007744" key="5">
    <source>
    </source>
</evidence>
<protein>
    <recommendedName>
        <fullName>CDGSH iron-sulfur domain-containing protein 1</fullName>
    </recommendedName>
    <alternativeName>
        <fullName evidence="1">Cysteine transaminase CISD1</fullName>
        <ecNumber evidence="1">2.6.1.3</ecNumber>
    </alternativeName>
    <alternativeName>
        <fullName>MitoNEET</fullName>
    </alternativeName>
</protein>
<accession>Q91WS0</accession>
<accession>Q3V2I3</accession>
<accession>Q8WUQ5</accession>
<keyword id="KW-0001">2Fe-2S</keyword>
<keyword id="KW-0007">Acetylation</keyword>
<keyword id="KW-0903">Direct protein sequencing</keyword>
<keyword id="KW-0408">Iron</keyword>
<keyword id="KW-0411">Iron-sulfur</keyword>
<keyword id="KW-1017">Isopeptide bond</keyword>
<keyword id="KW-0472">Membrane</keyword>
<keyword id="KW-0479">Metal-binding</keyword>
<keyword id="KW-0496">Mitochondrion</keyword>
<keyword id="KW-1000">Mitochondrion outer membrane</keyword>
<keyword id="KW-1185">Reference proteome</keyword>
<keyword id="KW-0704">Schiff base</keyword>
<keyword id="KW-0735">Signal-anchor</keyword>
<keyword id="KW-0808">Transferase</keyword>
<keyword id="KW-0812">Transmembrane</keyword>
<keyword id="KW-1133">Transmembrane helix</keyword>
<keyword id="KW-0832">Ubl conjugation</keyword>
<feature type="chain" id="PRO_0000089804" description="CDGSH iron-sulfur domain-containing protein 1">
    <location>
        <begin position="1"/>
        <end position="108"/>
    </location>
</feature>
<feature type="transmembrane region" description="Helical; Signal-anchor for type III membrane protein" evidence="2">
    <location>
        <begin position="14"/>
        <end position="31"/>
    </location>
</feature>
<feature type="topological domain" description="Cytoplasmic" evidence="2">
    <location>
        <begin position="32"/>
        <end position="108"/>
    </location>
</feature>
<feature type="active site" description="Schiff-base intermediate with pyridoxal 5'-phosphate" evidence="1">
    <location>
        <position position="55"/>
    </location>
</feature>
<feature type="binding site" evidence="1">
    <location>
        <position position="72"/>
    </location>
    <ligand>
        <name>[2Fe-2S] cluster</name>
        <dbReference type="ChEBI" id="CHEBI:190135"/>
    </ligand>
</feature>
<feature type="binding site" evidence="1">
    <location>
        <position position="74"/>
    </location>
    <ligand>
        <name>[2Fe-2S] cluster</name>
        <dbReference type="ChEBI" id="CHEBI:190135"/>
    </ligand>
</feature>
<feature type="binding site" evidence="1">
    <location>
        <position position="83"/>
    </location>
    <ligand>
        <name>[2Fe-2S] cluster</name>
        <dbReference type="ChEBI" id="CHEBI:190135"/>
    </ligand>
</feature>
<feature type="binding site" evidence="1">
    <location>
        <position position="87"/>
    </location>
    <ligand>
        <name>[2Fe-2S] cluster</name>
        <dbReference type="ChEBI" id="CHEBI:190135"/>
    </ligand>
</feature>
<feature type="modified residue" description="N6-acetyllysine; alternate" evidence="5">
    <location>
        <position position="55"/>
    </location>
</feature>
<feature type="modified residue" description="N6-acetyllysine; alternate" evidence="5">
    <location>
        <position position="68"/>
    </location>
</feature>
<feature type="modified residue" description="N6-acetyllysine; alternate" evidence="5">
    <location>
        <position position="104"/>
    </location>
</feature>
<feature type="cross-link" description="Glycyl lysine isopeptide (Lys-Gly) (interchain with G-Cter in ubiquitin)" evidence="1">
    <location>
        <position position="42"/>
    </location>
</feature>
<feature type="cross-link" description="Glycyl lysine isopeptide (Lys-Gly) (interchain with G-Cter in ubiquitin); alternate" evidence="1">
    <location>
        <position position="55"/>
    </location>
</feature>
<feature type="cross-link" description="Glycyl lysine isopeptide (Lys-Gly) (interchain with G-Cter in ubiquitin); alternate" evidence="1">
    <location>
        <position position="68"/>
    </location>
</feature>
<feature type="cross-link" description="Glycyl lysine isopeptide (Lys-Gly) (interchain with G-Cter in ubiquitin)" evidence="1">
    <location>
        <position position="78"/>
    </location>
</feature>
<feature type="cross-link" description="Glycyl lysine isopeptide (Lys-Gly) (interchain with G-Cter in ubiquitin)" evidence="1">
    <location>
        <position position="79"/>
    </location>
</feature>
<feature type="cross-link" description="Glycyl lysine isopeptide (Lys-Gly) (interchain with G-Cter in ubiquitin)" evidence="1">
    <location>
        <position position="89"/>
    </location>
</feature>
<feature type="cross-link" description="Glycyl lysine isopeptide (Lys-Gly) (interchain with G-Cter in ubiquitin); alternate" evidence="1">
    <location>
        <position position="104"/>
    </location>
</feature>
<feature type="cross-link" description="Glycyl lysine isopeptide (Lys-Gly) (interchain with G-Cter in ubiquitin)" evidence="1">
    <location>
        <position position="105"/>
    </location>
</feature>
<feature type="cross-link" description="Glycyl lysine isopeptide (Lys-Gly) (interchain with G-Cter in ubiquitin)" evidence="1">
    <location>
        <position position="106"/>
    </location>
</feature>
<comment type="function">
    <text evidence="1 3">L-cysteine transaminase that catalyzes the reversible transfer of the amino group from L-cysteine to the alpha-keto acid 2-oxoglutarate to respectively form 2-oxo-3-sulfanylpropanoate and L-glutamate (By similarity). The catalytic cycle occurs in the presence of pyridoxal 5'-phosphate (PLP) cofactor that facilitates transamination by initially forming an internal aldimine with the epsilon-amino group of active site Lys-55 residue on the enzyme (PLP-enzyme aldimine), subsequently displaced by formation of an external aldimine with the substrate amino group (PLP-L-cysteine aldimine). The external aldimine is further deprotonated to form a carbanion intermediate, which in the presence of 2-oxoglutarate regenerates PLP yielding final products 2-oxo-3-sulfanylpropanoate and L-glutamate. The proton transfer in carbanion intermediate is suggested to be controlled by the active site lysine residue, whereas PLP stabilizes carbanion structure through electron delocalization, also known as the electron sink effect (By similarity). Plays a key role in regulating maximal capacity for electron transport and oxidative phosphorylation (PubMed:17376863). May be involved in iron-sulfur cluster shuttling and/or in redox reactions. Can transfer the [2Fe-2S] cluster to an apo-acceptor protein only when in the oxidation state, likely serving as a redox sensor that regulates mitochondrial iron-sulfur cluster assembly and iron trafficking upon oxidative stress (By similarity).</text>
</comment>
<comment type="catalytic activity">
    <reaction evidence="1">
        <text>L-cysteine + 2-oxoglutarate = 2-oxo-3-sulfanylpropanoate + L-glutamate</text>
        <dbReference type="Rhea" id="RHEA:17441"/>
        <dbReference type="ChEBI" id="CHEBI:16810"/>
        <dbReference type="ChEBI" id="CHEBI:29985"/>
        <dbReference type="ChEBI" id="CHEBI:35235"/>
        <dbReference type="ChEBI" id="CHEBI:57678"/>
        <dbReference type="EC" id="2.6.1.3"/>
    </reaction>
    <physiologicalReaction direction="left-to-right" evidence="1">
        <dbReference type="Rhea" id="RHEA:17442"/>
    </physiologicalReaction>
    <physiologicalReaction direction="right-to-left" evidence="1">
        <dbReference type="Rhea" id="RHEA:17443"/>
    </physiologicalReaction>
</comment>
<comment type="cofactor">
    <cofactor evidence="1">
        <name>[2Fe-2S] cluster</name>
        <dbReference type="ChEBI" id="CHEBI:190135"/>
    </cofactor>
    <text evidence="1">Binds 1 [2Fe-2S] cluster per subunit. The [2Fe-2S] cluster is redox-active and pH labile and is significantly less stable at pH 4.5 as compared with pH 7.0.</text>
</comment>
<comment type="cofactor">
    <cofactor evidence="1">
        <name>pyridoxal 5'-phosphate</name>
        <dbReference type="ChEBI" id="CHEBI:597326"/>
    </cofactor>
</comment>
<comment type="subunit">
    <text evidence="1">Homodimer.</text>
</comment>
<comment type="subcellular location">
    <subcellularLocation>
        <location evidence="3">Mitochondrion outer membrane</location>
        <topology evidence="3">Single-pass type III membrane protein</topology>
    </subcellularLocation>
</comment>
<comment type="tissue specificity">
    <text evidence="3">Liver, adipose, skeletal muscle and heart (at protein level). Widely expressed. Expressed at the highest levels in the heart.</text>
</comment>
<comment type="PTM">
    <text evidence="1">Ubiquitinated by PRKN during mitophagy, leading to its degradation and enhancement of mitophagy. Deubiquitinated by USP30.</text>
</comment>
<comment type="similarity">
    <text evidence="4">Belongs to the CISD protein family.</text>
</comment>
<proteinExistence type="evidence at protein level"/>
<dbReference type="EC" id="2.6.1.3" evidence="1"/>
<dbReference type="EMBL" id="AK075907">
    <property type="protein sequence ID" value="BAC36046.1"/>
    <property type="molecule type" value="mRNA"/>
</dbReference>
<dbReference type="EMBL" id="AK131605">
    <property type="protein sequence ID" value="BAE20715.1"/>
    <property type="molecule type" value="mRNA"/>
</dbReference>
<dbReference type="EMBL" id="AK131812">
    <property type="protein sequence ID" value="BAE20814.1"/>
    <property type="molecule type" value="mRNA"/>
</dbReference>
<dbReference type="EMBL" id="AK131995">
    <property type="protein sequence ID" value="BAE20925.1"/>
    <property type="molecule type" value="mRNA"/>
</dbReference>
<dbReference type="EMBL" id="AK167898">
    <property type="protein sequence ID" value="BAE39909.1"/>
    <property type="molecule type" value="mRNA"/>
</dbReference>
<dbReference type="EMBL" id="BC013522">
    <property type="protein sequence ID" value="AAH13522.1"/>
    <property type="molecule type" value="mRNA"/>
</dbReference>
<dbReference type="EMBL" id="BC019860">
    <property type="protein sequence ID" value="AAH19860.1"/>
    <property type="molecule type" value="mRNA"/>
</dbReference>
<dbReference type="EMBL" id="BC021952">
    <property type="protein sequence ID" value="AAH21952.1"/>
    <property type="molecule type" value="mRNA"/>
</dbReference>
<dbReference type="CCDS" id="CCDS23917.1"/>
<dbReference type="RefSeq" id="NP_598768.1">
    <property type="nucleotide sequence ID" value="NM_134007.4"/>
</dbReference>
<dbReference type="SMR" id="Q91WS0"/>
<dbReference type="BioGRID" id="206706">
    <property type="interactions" value="39"/>
</dbReference>
<dbReference type="FunCoup" id="Q91WS0">
    <property type="interactions" value="1182"/>
</dbReference>
<dbReference type="IntAct" id="Q91WS0">
    <property type="interactions" value="1"/>
</dbReference>
<dbReference type="STRING" id="10090.ENSMUSP00000043559"/>
<dbReference type="GlyGen" id="Q91WS0">
    <property type="glycosylation" value="2 sites, 1 N-linked glycan (1 site), 1 O-linked glycan (1 site)"/>
</dbReference>
<dbReference type="iPTMnet" id="Q91WS0"/>
<dbReference type="PhosphoSitePlus" id="Q91WS0"/>
<dbReference type="SwissPalm" id="Q91WS0"/>
<dbReference type="jPOST" id="Q91WS0"/>
<dbReference type="PaxDb" id="10090-ENSMUSP00000043559"/>
<dbReference type="PeptideAtlas" id="Q91WS0"/>
<dbReference type="ProteomicsDB" id="283623"/>
<dbReference type="Pumba" id="Q91WS0"/>
<dbReference type="ABCD" id="Q91WS0">
    <property type="antibodies" value="2 sequenced antibodies"/>
</dbReference>
<dbReference type="Antibodypedia" id="45107">
    <property type="antibodies" value="256 antibodies from 29 providers"/>
</dbReference>
<dbReference type="DNASU" id="52637"/>
<dbReference type="Ensembl" id="ENSMUST00000045887.9">
    <property type="protein sequence ID" value="ENSMUSP00000043559.9"/>
    <property type="gene ID" value="ENSMUSG00000037710.9"/>
</dbReference>
<dbReference type="GeneID" id="52637"/>
<dbReference type="KEGG" id="mmu:52637"/>
<dbReference type="UCSC" id="uc007foq.1">
    <property type="organism name" value="mouse"/>
</dbReference>
<dbReference type="AGR" id="MGI:1261855"/>
<dbReference type="CTD" id="55847"/>
<dbReference type="MGI" id="MGI:1261855">
    <property type="gene designation" value="Cisd1"/>
</dbReference>
<dbReference type="VEuPathDB" id="HostDB:ENSMUSG00000037710"/>
<dbReference type="eggNOG" id="KOG3461">
    <property type="taxonomic scope" value="Eukaryota"/>
</dbReference>
<dbReference type="GeneTree" id="ENSGT00940000154445"/>
<dbReference type="HOGENOM" id="CLU_132293_1_0_1"/>
<dbReference type="InParanoid" id="Q91WS0"/>
<dbReference type="OMA" id="VAAWSWC"/>
<dbReference type="OrthoDB" id="449252at2759"/>
<dbReference type="PhylomeDB" id="Q91WS0"/>
<dbReference type="TreeFam" id="TF324661"/>
<dbReference type="BioGRID-ORCS" id="52637">
    <property type="hits" value="2 hits in 76 CRISPR screens"/>
</dbReference>
<dbReference type="CD-CODE" id="CE726F99">
    <property type="entry name" value="Postsynaptic density"/>
</dbReference>
<dbReference type="ChiTaRS" id="Cisd1">
    <property type="organism name" value="mouse"/>
</dbReference>
<dbReference type="PRO" id="PR:Q91WS0"/>
<dbReference type="Proteomes" id="UP000000589">
    <property type="component" value="Chromosome 10"/>
</dbReference>
<dbReference type="RNAct" id="Q91WS0">
    <property type="molecule type" value="protein"/>
</dbReference>
<dbReference type="Bgee" id="ENSMUSG00000037710">
    <property type="expression patterns" value="Expressed in interventricular septum and 270 other cell types or tissues"/>
</dbReference>
<dbReference type="GO" id="GO:0005741">
    <property type="term" value="C:mitochondrial outer membrane"/>
    <property type="evidence" value="ECO:0000314"/>
    <property type="project" value="MGI"/>
</dbReference>
<dbReference type="GO" id="GO:0005739">
    <property type="term" value="C:mitochondrion"/>
    <property type="evidence" value="ECO:0000314"/>
    <property type="project" value="UniProtKB"/>
</dbReference>
<dbReference type="GO" id="GO:0051537">
    <property type="term" value="F:2 iron, 2 sulfur cluster binding"/>
    <property type="evidence" value="ECO:0000250"/>
    <property type="project" value="UniProtKB"/>
</dbReference>
<dbReference type="GO" id="GO:0005506">
    <property type="term" value="F:iron ion binding"/>
    <property type="evidence" value="ECO:0000266"/>
    <property type="project" value="MGI"/>
</dbReference>
<dbReference type="GO" id="GO:0047801">
    <property type="term" value="F:L-cysteine transaminase activity"/>
    <property type="evidence" value="ECO:0000250"/>
    <property type="project" value="UniProtKB"/>
</dbReference>
<dbReference type="GO" id="GO:0042803">
    <property type="term" value="F:protein homodimerization activity"/>
    <property type="evidence" value="ECO:0000250"/>
    <property type="project" value="UniProtKB"/>
</dbReference>
<dbReference type="GO" id="GO:0030170">
    <property type="term" value="F:pyridoxal phosphate binding"/>
    <property type="evidence" value="ECO:0000250"/>
    <property type="project" value="UniProtKB"/>
</dbReference>
<dbReference type="GO" id="GO:0051604">
    <property type="term" value="P:protein maturation"/>
    <property type="evidence" value="ECO:0000250"/>
    <property type="project" value="UniProtKB"/>
</dbReference>
<dbReference type="GO" id="GO:0010506">
    <property type="term" value="P:regulation of autophagy"/>
    <property type="evidence" value="ECO:0007669"/>
    <property type="project" value="InterPro"/>
</dbReference>
<dbReference type="GO" id="GO:0043457">
    <property type="term" value="P:regulation of cellular respiration"/>
    <property type="evidence" value="ECO:0000315"/>
    <property type="project" value="MGI"/>
</dbReference>
<dbReference type="FunFam" id="3.40.5.90:FF:000001">
    <property type="entry name" value="CDGSH iron-sulfur domain-containing protein 1"/>
    <property type="match status" value="1"/>
</dbReference>
<dbReference type="Gene3D" id="3.40.5.90">
    <property type="entry name" value="CDGSH iron-sulfur domain, mitoNEET-type"/>
    <property type="match status" value="1"/>
</dbReference>
<dbReference type="InterPro" id="IPR045131">
    <property type="entry name" value="CISD1/2"/>
</dbReference>
<dbReference type="InterPro" id="IPR018967">
    <property type="entry name" value="FeS-contain_CDGSH-typ"/>
</dbReference>
<dbReference type="InterPro" id="IPR019610">
    <property type="entry name" value="FeS-contain_mitoNEET_N"/>
</dbReference>
<dbReference type="InterPro" id="IPR042216">
    <property type="entry name" value="MitoNEET_CISD"/>
</dbReference>
<dbReference type="PANTHER" id="PTHR13680">
    <property type="entry name" value="CDGSH IRON-SULFUR DOMAIN-CONTAINING PROTEIN 1"/>
    <property type="match status" value="1"/>
</dbReference>
<dbReference type="PANTHER" id="PTHR13680:SF5">
    <property type="entry name" value="CDGSH IRON-SULFUR DOMAIN-CONTAINING PROTEIN 1"/>
    <property type="match status" value="1"/>
</dbReference>
<dbReference type="Pfam" id="PF10660">
    <property type="entry name" value="MitoNEET_N"/>
    <property type="match status" value="1"/>
</dbReference>
<dbReference type="Pfam" id="PF09360">
    <property type="entry name" value="zf-CDGSH"/>
    <property type="match status" value="1"/>
</dbReference>
<dbReference type="SMART" id="SM00704">
    <property type="entry name" value="ZnF_CDGSH"/>
    <property type="match status" value="1"/>
</dbReference>
<gene>
    <name type="primary">Cisd1</name>
    <name type="synonym">D10Ertd214e</name>
    <name type="synonym">Zcd1</name>
</gene>
<name>CISD1_MOUSE</name>
<organism>
    <name type="scientific">Mus musculus</name>
    <name type="common">Mouse</name>
    <dbReference type="NCBI Taxonomy" id="10090"/>
    <lineage>
        <taxon>Eukaryota</taxon>
        <taxon>Metazoa</taxon>
        <taxon>Chordata</taxon>
        <taxon>Craniata</taxon>
        <taxon>Vertebrata</taxon>
        <taxon>Euteleostomi</taxon>
        <taxon>Mammalia</taxon>
        <taxon>Eutheria</taxon>
        <taxon>Euarchontoglires</taxon>
        <taxon>Glires</taxon>
        <taxon>Rodentia</taxon>
        <taxon>Myomorpha</taxon>
        <taxon>Muroidea</taxon>
        <taxon>Muridae</taxon>
        <taxon>Murinae</taxon>
        <taxon>Mus</taxon>
        <taxon>Mus</taxon>
    </lineage>
</organism>
<sequence length="108" mass="12097">MGLSSNSAVRVEWIAAVTFAAGTAALGYLAYKKFYAKENRTKAMVNLQIQKDNPKVVHAFDMEDLGDKAVYCRCWRSKKFPFCDGAHIKHNEETGDNVGPLIIKKKET</sequence>
<reference key="1">
    <citation type="journal article" date="2005" name="Science">
        <title>The transcriptional landscape of the mammalian genome.</title>
        <authorList>
            <person name="Carninci P."/>
            <person name="Kasukawa T."/>
            <person name="Katayama S."/>
            <person name="Gough J."/>
            <person name="Frith M.C."/>
            <person name="Maeda N."/>
            <person name="Oyama R."/>
            <person name="Ravasi T."/>
            <person name="Lenhard B."/>
            <person name="Wells C."/>
            <person name="Kodzius R."/>
            <person name="Shimokawa K."/>
            <person name="Bajic V.B."/>
            <person name="Brenner S.E."/>
            <person name="Batalov S."/>
            <person name="Forrest A.R."/>
            <person name="Zavolan M."/>
            <person name="Davis M.J."/>
            <person name="Wilming L.G."/>
            <person name="Aidinis V."/>
            <person name="Allen J.E."/>
            <person name="Ambesi-Impiombato A."/>
            <person name="Apweiler R."/>
            <person name="Aturaliya R.N."/>
            <person name="Bailey T.L."/>
            <person name="Bansal M."/>
            <person name="Baxter L."/>
            <person name="Beisel K.W."/>
            <person name="Bersano T."/>
            <person name="Bono H."/>
            <person name="Chalk A.M."/>
            <person name="Chiu K.P."/>
            <person name="Choudhary V."/>
            <person name="Christoffels A."/>
            <person name="Clutterbuck D.R."/>
            <person name="Crowe M.L."/>
            <person name="Dalla E."/>
            <person name="Dalrymple B.P."/>
            <person name="de Bono B."/>
            <person name="Della Gatta G."/>
            <person name="di Bernardo D."/>
            <person name="Down T."/>
            <person name="Engstrom P."/>
            <person name="Fagiolini M."/>
            <person name="Faulkner G."/>
            <person name="Fletcher C.F."/>
            <person name="Fukushima T."/>
            <person name="Furuno M."/>
            <person name="Futaki S."/>
            <person name="Gariboldi M."/>
            <person name="Georgii-Hemming P."/>
            <person name="Gingeras T.R."/>
            <person name="Gojobori T."/>
            <person name="Green R.E."/>
            <person name="Gustincich S."/>
            <person name="Harbers M."/>
            <person name="Hayashi Y."/>
            <person name="Hensch T.K."/>
            <person name="Hirokawa N."/>
            <person name="Hill D."/>
            <person name="Huminiecki L."/>
            <person name="Iacono M."/>
            <person name="Ikeo K."/>
            <person name="Iwama A."/>
            <person name="Ishikawa T."/>
            <person name="Jakt M."/>
            <person name="Kanapin A."/>
            <person name="Katoh M."/>
            <person name="Kawasawa Y."/>
            <person name="Kelso J."/>
            <person name="Kitamura H."/>
            <person name="Kitano H."/>
            <person name="Kollias G."/>
            <person name="Krishnan S.P."/>
            <person name="Kruger A."/>
            <person name="Kummerfeld S.K."/>
            <person name="Kurochkin I.V."/>
            <person name="Lareau L.F."/>
            <person name="Lazarevic D."/>
            <person name="Lipovich L."/>
            <person name="Liu J."/>
            <person name="Liuni S."/>
            <person name="McWilliam S."/>
            <person name="Madan Babu M."/>
            <person name="Madera M."/>
            <person name="Marchionni L."/>
            <person name="Matsuda H."/>
            <person name="Matsuzawa S."/>
            <person name="Miki H."/>
            <person name="Mignone F."/>
            <person name="Miyake S."/>
            <person name="Morris K."/>
            <person name="Mottagui-Tabar S."/>
            <person name="Mulder N."/>
            <person name="Nakano N."/>
            <person name="Nakauchi H."/>
            <person name="Ng P."/>
            <person name="Nilsson R."/>
            <person name="Nishiguchi S."/>
            <person name="Nishikawa S."/>
            <person name="Nori F."/>
            <person name="Ohara O."/>
            <person name="Okazaki Y."/>
            <person name="Orlando V."/>
            <person name="Pang K.C."/>
            <person name="Pavan W.J."/>
            <person name="Pavesi G."/>
            <person name="Pesole G."/>
            <person name="Petrovsky N."/>
            <person name="Piazza S."/>
            <person name="Reed J."/>
            <person name="Reid J.F."/>
            <person name="Ring B.Z."/>
            <person name="Ringwald M."/>
            <person name="Rost B."/>
            <person name="Ruan Y."/>
            <person name="Salzberg S.L."/>
            <person name="Sandelin A."/>
            <person name="Schneider C."/>
            <person name="Schoenbach C."/>
            <person name="Sekiguchi K."/>
            <person name="Semple C.A."/>
            <person name="Seno S."/>
            <person name="Sessa L."/>
            <person name="Sheng Y."/>
            <person name="Shibata Y."/>
            <person name="Shimada H."/>
            <person name="Shimada K."/>
            <person name="Silva D."/>
            <person name="Sinclair B."/>
            <person name="Sperling S."/>
            <person name="Stupka E."/>
            <person name="Sugiura K."/>
            <person name="Sultana R."/>
            <person name="Takenaka Y."/>
            <person name="Taki K."/>
            <person name="Tammoja K."/>
            <person name="Tan S.L."/>
            <person name="Tang S."/>
            <person name="Taylor M.S."/>
            <person name="Tegner J."/>
            <person name="Teichmann S.A."/>
            <person name="Ueda H.R."/>
            <person name="van Nimwegen E."/>
            <person name="Verardo R."/>
            <person name="Wei C.L."/>
            <person name="Yagi K."/>
            <person name="Yamanishi H."/>
            <person name="Zabarovsky E."/>
            <person name="Zhu S."/>
            <person name="Zimmer A."/>
            <person name="Hide W."/>
            <person name="Bult C."/>
            <person name="Grimmond S.M."/>
            <person name="Teasdale R.D."/>
            <person name="Liu E.T."/>
            <person name="Brusic V."/>
            <person name="Quackenbush J."/>
            <person name="Wahlestedt C."/>
            <person name="Mattick J.S."/>
            <person name="Hume D.A."/>
            <person name="Kai C."/>
            <person name="Sasaki D."/>
            <person name="Tomaru Y."/>
            <person name="Fukuda S."/>
            <person name="Kanamori-Katayama M."/>
            <person name="Suzuki M."/>
            <person name="Aoki J."/>
            <person name="Arakawa T."/>
            <person name="Iida J."/>
            <person name="Imamura K."/>
            <person name="Itoh M."/>
            <person name="Kato T."/>
            <person name="Kawaji H."/>
            <person name="Kawagashira N."/>
            <person name="Kawashima T."/>
            <person name="Kojima M."/>
            <person name="Kondo S."/>
            <person name="Konno H."/>
            <person name="Nakano K."/>
            <person name="Ninomiya N."/>
            <person name="Nishio T."/>
            <person name="Okada M."/>
            <person name="Plessy C."/>
            <person name="Shibata K."/>
            <person name="Shiraki T."/>
            <person name="Suzuki S."/>
            <person name="Tagami M."/>
            <person name="Waki K."/>
            <person name="Watahiki A."/>
            <person name="Okamura-Oho Y."/>
            <person name="Suzuki H."/>
            <person name="Kawai J."/>
            <person name="Hayashizaki Y."/>
        </authorList>
    </citation>
    <scope>NUCLEOTIDE SEQUENCE [LARGE SCALE MRNA]</scope>
    <source>
        <strain>BALB/cJ</strain>
        <strain>C57BL/6J</strain>
        <tissue>Pancreas</tissue>
        <tissue>Tongue</tissue>
    </source>
</reference>
<reference key="2">
    <citation type="journal article" date="2004" name="Genome Res.">
        <title>The status, quality, and expansion of the NIH full-length cDNA project: the Mammalian Gene Collection (MGC).</title>
        <authorList>
            <consortium name="The MGC Project Team"/>
        </authorList>
    </citation>
    <scope>NUCLEOTIDE SEQUENCE [LARGE SCALE MRNA]</scope>
    <source>
        <tissue>Kidney</tissue>
        <tissue>Liver</tissue>
    </source>
</reference>
<reference key="3">
    <citation type="submission" date="2007-04" db="UniProtKB">
        <authorList>
            <person name="Lubec G."/>
            <person name="Kang S.U."/>
        </authorList>
    </citation>
    <scope>PROTEIN SEQUENCE OF 43-51; 56-68 AND 90-104</scope>
    <scope>IDENTIFICATION BY MASS SPECTROMETRY</scope>
    <source>
        <strain>C57BL/6J</strain>
        <tissue>Brain</tissue>
    </source>
</reference>
<reference key="4">
    <citation type="journal article" date="2007" name="Proc. Natl. Acad. Sci. U.S.A.">
        <title>MitoNEET is an iron-containing outer mitochondrial membrane protein that regulates oxidative capacity.</title>
        <authorList>
            <person name="Wiley S.E."/>
            <person name="Murphy A.N."/>
            <person name="Ross S.A."/>
            <person name="van der Geer P."/>
            <person name="Dixon J.E."/>
        </authorList>
    </citation>
    <scope>FUNCTION</scope>
    <scope>SUBCELLULAR LOCATION</scope>
    <scope>TISSUE SPECIFICITY</scope>
</reference>
<reference key="5">
    <citation type="journal article" date="2010" name="Cell">
        <title>A tissue-specific atlas of mouse protein phosphorylation and expression.</title>
        <authorList>
            <person name="Huttlin E.L."/>
            <person name="Jedrychowski M.P."/>
            <person name="Elias J.E."/>
            <person name="Goswami T."/>
            <person name="Rad R."/>
            <person name="Beausoleil S.A."/>
            <person name="Villen J."/>
            <person name="Haas W."/>
            <person name="Sowa M.E."/>
            <person name="Gygi S.P."/>
        </authorList>
    </citation>
    <scope>IDENTIFICATION BY MASS SPECTROMETRY [LARGE SCALE ANALYSIS]</scope>
    <source>
        <tissue>Brain</tissue>
        <tissue>Brown adipose tissue</tissue>
        <tissue>Heart</tissue>
        <tissue>Kidney</tissue>
        <tissue>Liver</tissue>
        <tissue>Lung</tissue>
        <tissue>Pancreas</tissue>
        <tissue>Spleen</tissue>
        <tissue>Testis</tissue>
    </source>
</reference>
<reference key="6">
    <citation type="journal article" date="2013" name="Proc. Natl. Acad. Sci. U.S.A.">
        <title>Label-free quantitative proteomics of the lysine acetylome in mitochondria identifies substrates of SIRT3 in metabolic pathways.</title>
        <authorList>
            <person name="Rardin M.J."/>
            <person name="Newman J.C."/>
            <person name="Held J.M."/>
            <person name="Cusack M.P."/>
            <person name="Sorensen D.J."/>
            <person name="Li B."/>
            <person name="Schilling B."/>
            <person name="Mooney S.D."/>
            <person name="Kahn C.R."/>
            <person name="Verdin E."/>
            <person name="Gibson B.W."/>
        </authorList>
    </citation>
    <scope>ACETYLATION [LARGE SCALE ANALYSIS] AT LYS-55; LYS-68 AND LYS-104</scope>
    <scope>IDENTIFICATION BY MASS SPECTROMETRY [LARGE SCALE ANALYSIS]</scope>
    <source>
        <tissue>Liver</tissue>
    </source>
</reference>